<gene>
    <name evidence="1" type="primary">lgt</name>
    <name type="ordered locus">BUsg_423.1</name>
</gene>
<dbReference type="EC" id="2.5.1.145" evidence="1"/>
<dbReference type="EMBL" id="AE013218">
    <property type="status" value="NOT_ANNOTATED_CDS"/>
    <property type="molecule type" value="Genomic_DNA"/>
</dbReference>
<dbReference type="SMR" id="P60968"/>
<dbReference type="UniPathway" id="UPA00664"/>
<dbReference type="Proteomes" id="UP000000416">
    <property type="component" value="Chromosome"/>
</dbReference>
<dbReference type="GO" id="GO:0005886">
    <property type="term" value="C:plasma membrane"/>
    <property type="evidence" value="ECO:0007669"/>
    <property type="project" value="UniProtKB-SubCell"/>
</dbReference>
<dbReference type="GO" id="GO:0008961">
    <property type="term" value="F:phosphatidylglycerol-prolipoprotein diacylglyceryl transferase activity"/>
    <property type="evidence" value="ECO:0007669"/>
    <property type="project" value="UniProtKB-UniRule"/>
</dbReference>
<dbReference type="GO" id="GO:0042158">
    <property type="term" value="P:lipoprotein biosynthetic process"/>
    <property type="evidence" value="ECO:0007669"/>
    <property type="project" value="UniProtKB-UniRule"/>
</dbReference>
<dbReference type="HAMAP" id="MF_01147">
    <property type="entry name" value="Lgt"/>
    <property type="match status" value="1"/>
</dbReference>
<dbReference type="InterPro" id="IPR001640">
    <property type="entry name" value="Lgt"/>
</dbReference>
<dbReference type="NCBIfam" id="TIGR00544">
    <property type="entry name" value="lgt"/>
    <property type="match status" value="1"/>
</dbReference>
<dbReference type="PANTHER" id="PTHR30589:SF0">
    <property type="entry name" value="PHOSPHATIDYLGLYCEROL--PROLIPOPROTEIN DIACYLGLYCERYL TRANSFERASE"/>
    <property type="match status" value="1"/>
</dbReference>
<dbReference type="PANTHER" id="PTHR30589">
    <property type="entry name" value="PROLIPOPROTEIN DIACYLGLYCERYL TRANSFERASE"/>
    <property type="match status" value="1"/>
</dbReference>
<dbReference type="Pfam" id="PF01790">
    <property type="entry name" value="LGT"/>
    <property type="match status" value="1"/>
</dbReference>
<dbReference type="PROSITE" id="PS01311">
    <property type="entry name" value="LGT"/>
    <property type="match status" value="1"/>
</dbReference>
<evidence type="ECO:0000255" key="1">
    <source>
        <dbReference type="HAMAP-Rule" id="MF_01147"/>
    </source>
</evidence>
<evidence type="ECO:0000305" key="2"/>
<accession>P60968</accession>
<sequence>MYINFPNINPIIFSIGSFKAHWYGFMYLISFMFAVWYGKKSVEKKNQIKINIENLLYIIFISSCIGGRIGYIIFYNFSYFSQNILCSLHIWEGGMSFHGGLIGAIIAMYYLSLKQNVKILKISDFIVPLVPFGLGAGRLGNFINSELFGRIAPNFPYAFLFPNTYKEDLKIVSKNPELQDILDKYGVLPRHPSQLYEFFLEGIFLFFIIYFFTRKKRNTGSISALFLISYGILRIISEFFREPDPQIGLLKNIITMGQILSIPMIIIGVLYVNLFIK</sequence>
<comment type="function">
    <text evidence="1">Catalyzes the transfer of the diacylglyceryl group from phosphatidylglycerol to the sulfhydryl group of the N-terminal cysteine of a prolipoprotein, the first step in the formation of mature lipoproteins.</text>
</comment>
<comment type="catalytic activity">
    <reaction evidence="1">
        <text>L-cysteinyl-[prolipoprotein] + a 1,2-diacyl-sn-glycero-3-phospho-(1'-sn-glycerol) = an S-1,2-diacyl-sn-glyceryl-L-cysteinyl-[prolipoprotein] + sn-glycerol 1-phosphate + H(+)</text>
        <dbReference type="Rhea" id="RHEA:56712"/>
        <dbReference type="Rhea" id="RHEA-COMP:14679"/>
        <dbReference type="Rhea" id="RHEA-COMP:14680"/>
        <dbReference type="ChEBI" id="CHEBI:15378"/>
        <dbReference type="ChEBI" id="CHEBI:29950"/>
        <dbReference type="ChEBI" id="CHEBI:57685"/>
        <dbReference type="ChEBI" id="CHEBI:64716"/>
        <dbReference type="ChEBI" id="CHEBI:140658"/>
        <dbReference type="EC" id="2.5.1.145"/>
    </reaction>
</comment>
<comment type="pathway">
    <text evidence="1">Protein modification; lipoprotein biosynthesis (diacylglyceryl transfer).</text>
</comment>
<comment type="subcellular location">
    <subcellularLocation>
        <location evidence="1">Cell inner membrane</location>
        <topology evidence="1">Multi-pass membrane protein</topology>
    </subcellularLocation>
</comment>
<comment type="similarity">
    <text evidence="1">Belongs to the Lgt family.</text>
</comment>
<comment type="sequence caution" evidence="2">
    <conflict type="frameshift">
        <sequence resource="EMBL" id="AE013218"/>
    </conflict>
</comment>
<keyword id="KW-0997">Cell inner membrane</keyword>
<keyword id="KW-1003">Cell membrane</keyword>
<keyword id="KW-0472">Membrane</keyword>
<keyword id="KW-0808">Transferase</keyword>
<keyword id="KW-0812">Transmembrane</keyword>
<keyword id="KW-1133">Transmembrane helix</keyword>
<feature type="chain" id="PRO_0000172571" description="Phosphatidylglycerol--prolipoprotein diacylglyceryl transferase">
    <location>
        <begin position="1"/>
        <end position="277"/>
    </location>
</feature>
<feature type="transmembrane region" description="Helical" evidence="1">
    <location>
        <begin position="11"/>
        <end position="31"/>
    </location>
</feature>
<feature type="transmembrane region" description="Helical" evidence="1">
    <location>
        <begin position="55"/>
        <end position="75"/>
    </location>
</feature>
<feature type="transmembrane region" description="Helical" evidence="1">
    <location>
        <begin position="93"/>
        <end position="113"/>
    </location>
</feature>
<feature type="transmembrane region" description="Helical" evidence="1">
    <location>
        <begin position="117"/>
        <end position="137"/>
    </location>
</feature>
<feature type="transmembrane region" description="Helical" evidence="1">
    <location>
        <begin position="192"/>
        <end position="212"/>
    </location>
</feature>
<feature type="transmembrane region" description="Helical" evidence="1">
    <location>
        <begin position="220"/>
        <end position="240"/>
    </location>
</feature>
<feature type="transmembrane region" description="Helical" evidence="1">
    <location>
        <begin position="256"/>
        <end position="276"/>
    </location>
</feature>
<feature type="binding site" evidence="1">
    <location>
        <position position="138"/>
    </location>
    <ligand>
        <name>a 1,2-diacyl-sn-glycero-3-phospho-(1'-sn-glycerol)</name>
        <dbReference type="ChEBI" id="CHEBI:64716"/>
    </ligand>
</feature>
<proteinExistence type="inferred from homology"/>
<organism>
    <name type="scientific">Buchnera aphidicola subsp. Schizaphis graminum (strain Sg)</name>
    <dbReference type="NCBI Taxonomy" id="198804"/>
    <lineage>
        <taxon>Bacteria</taxon>
        <taxon>Pseudomonadati</taxon>
        <taxon>Pseudomonadota</taxon>
        <taxon>Gammaproteobacteria</taxon>
        <taxon>Enterobacterales</taxon>
        <taxon>Erwiniaceae</taxon>
        <taxon>Buchnera</taxon>
    </lineage>
</organism>
<name>LGT_BUCAP</name>
<reference key="1">
    <citation type="journal article" date="2002" name="Science">
        <title>50 million years of genomic stasis in endosymbiotic bacteria.</title>
        <authorList>
            <person name="Tamas I."/>
            <person name="Klasson L."/>
            <person name="Canbaeck B."/>
            <person name="Naeslund A.K."/>
            <person name="Eriksson A.-S."/>
            <person name="Wernegreen J.J."/>
            <person name="Sandstroem J.P."/>
            <person name="Moran N.A."/>
            <person name="Andersson S.G.E."/>
        </authorList>
    </citation>
    <scope>NUCLEOTIDE SEQUENCE [LARGE SCALE GENOMIC DNA]</scope>
    <source>
        <strain>Sg</strain>
    </source>
</reference>
<protein>
    <recommendedName>
        <fullName evidence="1">Phosphatidylglycerol--prolipoprotein diacylglyceryl transferase</fullName>
        <ecNumber evidence="1">2.5.1.145</ecNumber>
    </recommendedName>
</protein>